<sequence>MPKLRSATTTQGRNMAGARALWRATGMKDGDFDKPIIAVVNSFTQFVPGHVHLKDLGQLVAREIEAAGGVAKEFNTIAVDDGIAMGHGGMLYSLPSRELIADSVEYMINAHCADAMVCISNCDKITPGMLMAAMRLNIPVIFVSGGPMEAGKTKLSDQIIKLDLVDAMIMAADPTVSDEDTAAVERSACPTCGSCSGMFTANSMNCLTEALGLSQPGNGSLLATHADREQLFKSAGHRIVELAKRYYEQDDVTALPRSIATRDAFENAIALDIAMGGSTNTVLHLLAIAQEGDVDFTMADIDRMSRRVPQLCKVAPSTQKYHMEDVHRAGGIVAILGELSRAGLLHTDVRNVLGLSLAELIEKYDVALNPSEEVKKFYSAGPGGIPTTKAFSQDCRWPSLDVDRKEGCIRTKENAYSQDGGLAVLAGNLAIDGCIVKTAGVDESILKFEGPAVVFESQDDAVAGILGGKVKAGDVVIVRYEGPKGGPGMQEMLYPTSYLKSMGLGKVCALITDGRFSGGSSGLSIGHVSPEAAAGGNIGLIADGDLISINIPSRTIDIKISDAELATRRAAMEAKGKAAWKPVNRERFVSFALRAYANLATSADKGAVRDRSKLGE</sequence>
<proteinExistence type="inferred from homology"/>
<gene>
    <name evidence="1" type="primary">ilvD</name>
    <name type="ordered locus">Tola_3093</name>
</gene>
<protein>
    <recommendedName>
        <fullName evidence="1">Dihydroxy-acid dehydratase</fullName>
        <shortName evidence="1">DAD</shortName>
        <ecNumber evidence="1">4.2.1.9</ecNumber>
    </recommendedName>
</protein>
<evidence type="ECO:0000255" key="1">
    <source>
        <dbReference type="HAMAP-Rule" id="MF_00012"/>
    </source>
</evidence>
<keyword id="KW-0001">2Fe-2S</keyword>
<keyword id="KW-0028">Amino-acid biosynthesis</keyword>
<keyword id="KW-0100">Branched-chain amino acid biosynthesis</keyword>
<keyword id="KW-0408">Iron</keyword>
<keyword id="KW-0411">Iron-sulfur</keyword>
<keyword id="KW-0456">Lyase</keyword>
<keyword id="KW-0460">Magnesium</keyword>
<keyword id="KW-0479">Metal-binding</keyword>
<keyword id="KW-1185">Reference proteome</keyword>
<feature type="chain" id="PRO_1000201790" description="Dihydroxy-acid dehydratase">
    <location>
        <begin position="1"/>
        <end position="616"/>
    </location>
</feature>
<feature type="active site" description="Proton acceptor" evidence="1">
    <location>
        <position position="517"/>
    </location>
</feature>
<feature type="binding site" evidence="1">
    <location>
        <position position="81"/>
    </location>
    <ligand>
        <name>Mg(2+)</name>
        <dbReference type="ChEBI" id="CHEBI:18420"/>
    </ligand>
</feature>
<feature type="binding site" evidence="1">
    <location>
        <position position="122"/>
    </location>
    <ligand>
        <name>[2Fe-2S] cluster</name>
        <dbReference type="ChEBI" id="CHEBI:190135"/>
    </ligand>
</feature>
<feature type="binding site" evidence="1">
    <location>
        <position position="123"/>
    </location>
    <ligand>
        <name>Mg(2+)</name>
        <dbReference type="ChEBI" id="CHEBI:18420"/>
    </ligand>
</feature>
<feature type="binding site" description="via carbamate group" evidence="1">
    <location>
        <position position="124"/>
    </location>
    <ligand>
        <name>Mg(2+)</name>
        <dbReference type="ChEBI" id="CHEBI:18420"/>
    </ligand>
</feature>
<feature type="binding site" evidence="1">
    <location>
        <position position="195"/>
    </location>
    <ligand>
        <name>[2Fe-2S] cluster</name>
        <dbReference type="ChEBI" id="CHEBI:190135"/>
    </ligand>
</feature>
<feature type="binding site" evidence="1">
    <location>
        <position position="491"/>
    </location>
    <ligand>
        <name>Mg(2+)</name>
        <dbReference type="ChEBI" id="CHEBI:18420"/>
    </ligand>
</feature>
<feature type="modified residue" description="N6-carboxylysine" evidence="1">
    <location>
        <position position="124"/>
    </location>
</feature>
<reference key="1">
    <citation type="submission" date="2009-05" db="EMBL/GenBank/DDBJ databases">
        <title>Complete sequence of Tolumonas auensis DSM 9187.</title>
        <authorList>
            <consortium name="US DOE Joint Genome Institute"/>
            <person name="Lucas S."/>
            <person name="Copeland A."/>
            <person name="Lapidus A."/>
            <person name="Glavina del Rio T."/>
            <person name="Tice H."/>
            <person name="Bruce D."/>
            <person name="Goodwin L."/>
            <person name="Pitluck S."/>
            <person name="Chertkov O."/>
            <person name="Brettin T."/>
            <person name="Detter J.C."/>
            <person name="Han C."/>
            <person name="Larimer F."/>
            <person name="Land M."/>
            <person name="Hauser L."/>
            <person name="Kyrpides N."/>
            <person name="Mikhailova N."/>
            <person name="Spring S."/>
            <person name="Beller H."/>
        </authorList>
    </citation>
    <scope>NUCLEOTIDE SEQUENCE [LARGE SCALE GENOMIC DNA]</scope>
    <source>
        <strain>DSM 9187 / NBRC 110442 / TA 4</strain>
    </source>
</reference>
<name>ILVD_TOLAT</name>
<dbReference type="EC" id="4.2.1.9" evidence="1"/>
<dbReference type="EMBL" id="CP001616">
    <property type="protein sequence ID" value="ACQ94682.1"/>
    <property type="molecule type" value="Genomic_DNA"/>
</dbReference>
<dbReference type="RefSeq" id="WP_015880131.1">
    <property type="nucleotide sequence ID" value="NC_012691.1"/>
</dbReference>
<dbReference type="SMR" id="C4LDS1"/>
<dbReference type="STRING" id="595494.Tola_3093"/>
<dbReference type="KEGG" id="tau:Tola_3093"/>
<dbReference type="eggNOG" id="COG0129">
    <property type="taxonomic scope" value="Bacteria"/>
</dbReference>
<dbReference type="HOGENOM" id="CLU_014271_4_3_6"/>
<dbReference type="OrthoDB" id="9807077at2"/>
<dbReference type="UniPathway" id="UPA00047">
    <property type="reaction ID" value="UER00057"/>
</dbReference>
<dbReference type="UniPathway" id="UPA00049">
    <property type="reaction ID" value="UER00061"/>
</dbReference>
<dbReference type="Proteomes" id="UP000009073">
    <property type="component" value="Chromosome"/>
</dbReference>
<dbReference type="GO" id="GO:0005829">
    <property type="term" value="C:cytosol"/>
    <property type="evidence" value="ECO:0007669"/>
    <property type="project" value="TreeGrafter"/>
</dbReference>
<dbReference type="GO" id="GO:0051537">
    <property type="term" value="F:2 iron, 2 sulfur cluster binding"/>
    <property type="evidence" value="ECO:0007669"/>
    <property type="project" value="UniProtKB-UniRule"/>
</dbReference>
<dbReference type="GO" id="GO:0004160">
    <property type="term" value="F:dihydroxy-acid dehydratase activity"/>
    <property type="evidence" value="ECO:0007669"/>
    <property type="project" value="UniProtKB-UniRule"/>
</dbReference>
<dbReference type="GO" id="GO:0000287">
    <property type="term" value="F:magnesium ion binding"/>
    <property type="evidence" value="ECO:0007669"/>
    <property type="project" value="UniProtKB-UniRule"/>
</dbReference>
<dbReference type="GO" id="GO:0009097">
    <property type="term" value="P:isoleucine biosynthetic process"/>
    <property type="evidence" value="ECO:0007669"/>
    <property type="project" value="UniProtKB-UniRule"/>
</dbReference>
<dbReference type="GO" id="GO:0009099">
    <property type="term" value="P:L-valine biosynthetic process"/>
    <property type="evidence" value="ECO:0007669"/>
    <property type="project" value="UniProtKB-UniRule"/>
</dbReference>
<dbReference type="FunFam" id="3.50.30.80:FF:000001">
    <property type="entry name" value="Dihydroxy-acid dehydratase"/>
    <property type="match status" value="1"/>
</dbReference>
<dbReference type="Gene3D" id="3.50.30.80">
    <property type="entry name" value="IlvD/EDD C-terminal domain-like"/>
    <property type="match status" value="1"/>
</dbReference>
<dbReference type="HAMAP" id="MF_00012">
    <property type="entry name" value="IlvD"/>
    <property type="match status" value="1"/>
</dbReference>
<dbReference type="InterPro" id="IPR042096">
    <property type="entry name" value="Dihydro-acid_dehy_C"/>
</dbReference>
<dbReference type="InterPro" id="IPR004404">
    <property type="entry name" value="DihydroxyA_deHydtase"/>
</dbReference>
<dbReference type="InterPro" id="IPR020558">
    <property type="entry name" value="DiOHA_6PGluconate_deHydtase_CS"/>
</dbReference>
<dbReference type="InterPro" id="IPR056740">
    <property type="entry name" value="ILV_EDD_C"/>
</dbReference>
<dbReference type="InterPro" id="IPR000581">
    <property type="entry name" value="ILV_EDD_N"/>
</dbReference>
<dbReference type="InterPro" id="IPR037237">
    <property type="entry name" value="IlvD/EDD_N"/>
</dbReference>
<dbReference type="NCBIfam" id="TIGR00110">
    <property type="entry name" value="ilvD"/>
    <property type="match status" value="1"/>
</dbReference>
<dbReference type="NCBIfam" id="NF009103">
    <property type="entry name" value="PRK12448.1"/>
    <property type="match status" value="1"/>
</dbReference>
<dbReference type="PANTHER" id="PTHR43661">
    <property type="entry name" value="D-XYLONATE DEHYDRATASE"/>
    <property type="match status" value="1"/>
</dbReference>
<dbReference type="PANTHER" id="PTHR43661:SF3">
    <property type="entry name" value="D-XYLONATE DEHYDRATASE YAGF-RELATED"/>
    <property type="match status" value="1"/>
</dbReference>
<dbReference type="Pfam" id="PF24877">
    <property type="entry name" value="ILV_EDD_C"/>
    <property type="match status" value="1"/>
</dbReference>
<dbReference type="Pfam" id="PF00920">
    <property type="entry name" value="ILVD_EDD_N"/>
    <property type="match status" value="1"/>
</dbReference>
<dbReference type="SUPFAM" id="SSF143975">
    <property type="entry name" value="IlvD/EDD N-terminal domain-like"/>
    <property type="match status" value="1"/>
</dbReference>
<dbReference type="SUPFAM" id="SSF52016">
    <property type="entry name" value="LeuD/IlvD-like"/>
    <property type="match status" value="1"/>
</dbReference>
<dbReference type="PROSITE" id="PS00886">
    <property type="entry name" value="ILVD_EDD_1"/>
    <property type="match status" value="1"/>
</dbReference>
<dbReference type="PROSITE" id="PS00887">
    <property type="entry name" value="ILVD_EDD_2"/>
    <property type="match status" value="1"/>
</dbReference>
<comment type="function">
    <text evidence="1">Functions in the biosynthesis of branched-chain amino acids. Catalyzes the dehydration of (2R,3R)-2,3-dihydroxy-3-methylpentanoate (2,3-dihydroxy-3-methylvalerate) into 2-oxo-3-methylpentanoate (2-oxo-3-methylvalerate) and of (2R)-2,3-dihydroxy-3-methylbutanoate (2,3-dihydroxyisovalerate) into 2-oxo-3-methylbutanoate (2-oxoisovalerate), the penultimate precursor to L-isoleucine and L-valine, respectively.</text>
</comment>
<comment type="catalytic activity">
    <reaction evidence="1">
        <text>(2R)-2,3-dihydroxy-3-methylbutanoate = 3-methyl-2-oxobutanoate + H2O</text>
        <dbReference type="Rhea" id="RHEA:24809"/>
        <dbReference type="ChEBI" id="CHEBI:11851"/>
        <dbReference type="ChEBI" id="CHEBI:15377"/>
        <dbReference type="ChEBI" id="CHEBI:49072"/>
        <dbReference type="EC" id="4.2.1.9"/>
    </reaction>
    <physiologicalReaction direction="left-to-right" evidence="1">
        <dbReference type="Rhea" id="RHEA:24810"/>
    </physiologicalReaction>
</comment>
<comment type="catalytic activity">
    <reaction evidence="1">
        <text>(2R,3R)-2,3-dihydroxy-3-methylpentanoate = (S)-3-methyl-2-oxopentanoate + H2O</text>
        <dbReference type="Rhea" id="RHEA:27694"/>
        <dbReference type="ChEBI" id="CHEBI:15377"/>
        <dbReference type="ChEBI" id="CHEBI:35146"/>
        <dbReference type="ChEBI" id="CHEBI:49258"/>
        <dbReference type="EC" id="4.2.1.9"/>
    </reaction>
    <physiologicalReaction direction="left-to-right" evidence="1">
        <dbReference type="Rhea" id="RHEA:27695"/>
    </physiologicalReaction>
</comment>
<comment type="cofactor">
    <cofactor evidence="1">
        <name>[2Fe-2S] cluster</name>
        <dbReference type="ChEBI" id="CHEBI:190135"/>
    </cofactor>
    <text evidence="1">Binds 1 [2Fe-2S] cluster per subunit. This cluster acts as a Lewis acid cofactor.</text>
</comment>
<comment type="cofactor">
    <cofactor evidence="1">
        <name>Mg(2+)</name>
        <dbReference type="ChEBI" id="CHEBI:18420"/>
    </cofactor>
</comment>
<comment type="pathway">
    <text evidence="1">Amino-acid biosynthesis; L-isoleucine biosynthesis; L-isoleucine from 2-oxobutanoate: step 3/4.</text>
</comment>
<comment type="pathway">
    <text evidence="1">Amino-acid biosynthesis; L-valine biosynthesis; L-valine from pyruvate: step 3/4.</text>
</comment>
<comment type="subunit">
    <text evidence="1">Homodimer.</text>
</comment>
<comment type="similarity">
    <text evidence="1">Belongs to the IlvD/Edd family.</text>
</comment>
<accession>C4LDS1</accession>
<organism>
    <name type="scientific">Tolumonas auensis (strain DSM 9187 / NBRC 110442 / TA 4)</name>
    <dbReference type="NCBI Taxonomy" id="595494"/>
    <lineage>
        <taxon>Bacteria</taxon>
        <taxon>Pseudomonadati</taxon>
        <taxon>Pseudomonadota</taxon>
        <taxon>Gammaproteobacteria</taxon>
        <taxon>Aeromonadales</taxon>
        <taxon>Aeromonadaceae</taxon>
        <taxon>Tolumonas</taxon>
    </lineage>
</organism>